<name>ARO1_CRYNB</name>
<keyword id="KW-0028">Amino-acid biosynthesis</keyword>
<keyword id="KW-0057">Aromatic amino acid biosynthesis</keyword>
<keyword id="KW-0067">ATP-binding</keyword>
<keyword id="KW-0963">Cytoplasm</keyword>
<keyword id="KW-0418">Kinase</keyword>
<keyword id="KW-0456">Lyase</keyword>
<keyword id="KW-0479">Metal-binding</keyword>
<keyword id="KW-0511">Multifunctional enzyme</keyword>
<keyword id="KW-0521">NADP</keyword>
<keyword id="KW-0547">Nucleotide-binding</keyword>
<keyword id="KW-0560">Oxidoreductase</keyword>
<keyword id="KW-0808">Transferase</keyword>
<keyword id="KW-0862">Zinc</keyword>
<protein>
    <recommendedName>
        <fullName evidence="1">Pentafunctional AROM polypeptide</fullName>
    </recommendedName>
    <domain>
        <recommendedName>
            <fullName evidence="1">3-dehydroquinate synthase</fullName>
            <shortName evidence="1">DHQS</shortName>
            <ecNumber evidence="1">4.2.3.4</ecNumber>
        </recommendedName>
    </domain>
    <domain>
        <recommendedName>
            <fullName evidence="1">3-phosphoshikimate 1-carboxyvinyltransferase</fullName>
            <ecNumber evidence="1">2.5.1.19</ecNumber>
        </recommendedName>
        <alternativeName>
            <fullName evidence="1">5-enolpyruvylshikimate-3-phosphate synthase</fullName>
            <shortName evidence="1">EPSP synthase</shortName>
            <shortName evidence="1">EPSPS</shortName>
        </alternativeName>
    </domain>
    <domain>
        <recommendedName>
            <fullName evidence="1">Shikimate kinase</fullName>
            <shortName evidence="1">SK</shortName>
            <ecNumber evidence="1">2.7.1.71</ecNumber>
        </recommendedName>
    </domain>
    <domain>
        <recommendedName>
            <fullName evidence="1">3-dehydroquinate dehydratase</fullName>
            <shortName evidence="1">3-dehydroquinase</shortName>
            <ecNumber evidence="1">4.2.1.10</ecNumber>
        </recommendedName>
    </domain>
    <domain>
        <recommendedName>
            <fullName evidence="1">Shikimate dehydrogenase</fullName>
            <ecNumber evidence="1">1.1.1.25</ecNumber>
        </recommendedName>
    </domain>
</protein>
<dbReference type="EC" id="4.2.3.4" evidence="1"/>
<dbReference type="EC" id="2.5.1.19" evidence="1"/>
<dbReference type="EC" id="2.7.1.71" evidence="1"/>
<dbReference type="EC" id="4.2.1.10" evidence="1"/>
<dbReference type="EC" id="1.1.1.25" evidence="1"/>
<dbReference type="EMBL" id="AAEY01000010">
    <property type="protein sequence ID" value="EAL22495.1"/>
    <property type="molecule type" value="Genomic_DNA"/>
</dbReference>
<dbReference type="RefSeq" id="XP_777142.1">
    <property type="nucleotide sequence ID" value="XM_772049.1"/>
</dbReference>
<dbReference type="SMR" id="P0CM23"/>
<dbReference type="EnsemblFungi" id="AAW41820">
    <property type="protein sequence ID" value="AAW41820"/>
    <property type="gene ID" value="CNB01990"/>
</dbReference>
<dbReference type="GeneID" id="4934467"/>
<dbReference type="KEGG" id="cnb:CNBB3730"/>
<dbReference type="VEuPathDB" id="FungiDB:CNBB3730"/>
<dbReference type="HOGENOM" id="CLU_001201_1_2_1"/>
<dbReference type="OrthoDB" id="2831at5206"/>
<dbReference type="UniPathway" id="UPA00053">
    <property type="reaction ID" value="UER00085"/>
</dbReference>
<dbReference type="UniPathway" id="UPA00053">
    <property type="reaction ID" value="UER00086"/>
</dbReference>
<dbReference type="UniPathway" id="UPA00053">
    <property type="reaction ID" value="UER00087"/>
</dbReference>
<dbReference type="UniPathway" id="UPA00053">
    <property type="reaction ID" value="UER00088"/>
</dbReference>
<dbReference type="UniPathway" id="UPA00053">
    <property type="reaction ID" value="UER00089"/>
</dbReference>
<dbReference type="GO" id="GO:0005737">
    <property type="term" value="C:cytoplasm"/>
    <property type="evidence" value="ECO:0007669"/>
    <property type="project" value="UniProtKB-SubCell"/>
</dbReference>
<dbReference type="GO" id="GO:0003855">
    <property type="term" value="F:3-dehydroquinate dehydratase activity"/>
    <property type="evidence" value="ECO:0007669"/>
    <property type="project" value="UniProtKB-UniRule"/>
</dbReference>
<dbReference type="GO" id="GO:0003856">
    <property type="term" value="F:3-dehydroquinate synthase activity"/>
    <property type="evidence" value="ECO:0007669"/>
    <property type="project" value="UniProtKB-UniRule"/>
</dbReference>
<dbReference type="GO" id="GO:0003866">
    <property type="term" value="F:3-phosphoshikimate 1-carboxyvinyltransferase activity"/>
    <property type="evidence" value="ECO:0007669"/>
    <property type="project" value="UniProtKB-UniRule"/>
</dbReference>
<dbReference type="GO" id="GO:0005524">
    <property type="term" value="F:ATP binding"/>
    <property type="evidence" value="ECO:0007669"/>
    <property type="project" value="UniProtKB-UniRule"/>
</dbReference>
<dbReference type="GO" id="GO:0046872">
    <property type="term" value="F:metal ion binding"/>
    <property type="evidence" value="ECO:0007669"/>
    <property type="project" value="UniProtKB-UniRule"/>
</dbReference>
<dbReference type="GO" id="GO:0004764">
    <property type="term" value="F:shikimate 3-dehydrogenase (NADP+) activity"/>
    <property type="evidence" value="ECO:0007669"/>
    <property type="project" value="UniProtKB-UniRule"/>
</dbReference>
<dbReference type="GO" id="GO:0004765">
    <property type="term" value="F:shikimate kinase activity"/>
    <property type="evidence" value="ECO:0007669"/>
    <property type="project" value="UniProtKB-UniRule"/>
</dbReference>
<dbReference type="GO" id="GO:0008652">
    <property type="term" value="P:amino acid biosynthetic process"/>
    <property type="evidence" value="ECO:0007669"/>
    <property type="project" value="UniProtKB-KW"/>
</dbReference>
<dbReference type="GO" id="GO:0009073">
    <property type="term" value="P:aromatic amino acid family biosynthetic process"/>
    <property type="evidence" value="ECO:0007669"/>
    <property type="project" value="UniProtKB-UniRule"/>
</dbReference>
<dbReference type="GO" id="GO:0009423">
    <property type="term" value="P:chorismate biosynthetic process"/>
    <property type="evidence" value="ECO:0007669"/>
    <property type="project" value="UniProtKB-UniRule"/>
</dbReference>
<dbReference type="CDD" id="cd00502">
    <property type="entry name" value="DHQase_I"/>
    <property type="match status" value="1"/>
</dbReference>
<dbReference type="CDD" id="cd08195">
    <property type="entry name" value="DHQS"/>
    <property type="match status" value="1"/>
</dbReference>
<dbReference type="CDD" id="cd01556">
    <property type="entry name" value="EPSP_synthase"/>
    <property type="match status" value="1"/>
</dbReference>
<dbReference type="CDD" id="cd01065">
    <property type="entry name" value="NAD_bind_Shikimate_DH"/>
    <property type="match status" value="1"/>
</dbReference>
<dbReference type="CDD" id="cd00464">
    <property type="entry name" value="SK"/>
    <property type="match status" value="1"/>
</dbReference>
<dbReference type="FunFam" id="1.20.1090.10:FF:000007">
    <property type="entry name" value="Pentafunctional AROM polypeptide"/>
    <property type="match status" value="1"/>
</dbReference>
<dbReference type="FunFam" id="3.20.20.70:FF:000135">
    <property type="entry name" value="Pentafunctional AROM polypeptide"/>
    <property type="match status" value="1"/>
</dbReference>
<dbReference type="FunFam" id="3.40.50.10860:FF:000026">
    <property type="entry name" value="Pentafunctional AROM polypeptide"/>
    <property type="match status" value="1"/>
</dbReference>
<dbReference type="FunFam" id="3.40.50.1970:FF:000007">
    <property type="entry name" value="Pentafunctional AROM polypeptide"/>
    <property type="match status" value="1"/>
</dbReference>
<dbReference type="FunFam" id="3.40.50.300:FF:002556">
    <property type="entry name" value="Pentafunctional AROM polypeptide"/>
    <property type="match status" value="1"/>
</dbReference>
<dbReference type="FunFam" id="3.65.10.10:FF:000007">
    <property type="entry name" value="Pentafunctional AROM polypeptide"/>
    <property type="match status" value="1"/>
</dbReference>
<dbReference type="FunFam" id="3.65.10.10:FF:000008">
    <property type="entry name" value="Pentafunctional AROM polypeptide"/>
    <property type="match status" value="1"/>
</dbReference>
<dbReference type="Gene3D" id="3.40.50.1970">
    <property type="match status" value="1"/>
</dbReference>
<dbReference type="Gene3D" id="3.20.20.70">
    <property type="entry name" value="Aldolase class I"/>
    <property type="match status" value="1"/>
</dbReference>
<dbReference type="Gene3D" id="1.20.1090.10">
    <property type="entry name" value="Dehydroquinate synthase-like - alpha domain"/>
    <property type="match status" value="1"/>
</dbReference>
<dbReference type="Gene3D" id="3.65.10.10">
    <property type="entry name" value="Enolpyruvate transferase domain"/>
    <property type="match status" value="2"/>
</dbReference>
<dbReference type="Gene3D" id="3.40.50.10860">
    <property type="entry name" value="Leucine Dehydrogenase, chain A, domain 1"/>
    <property type="match status" value="1"/>
</dbReference>
<dbReference type="Gene3D" id="3.40.50.720">
    <property type="entry name" value="NAD(P)-binding Rossmann-like Domain"/>
    <property type="match status" value="1"/>
</dbReference>
<dbReference type="Gene3D" id="3.40.50.300">
    <property type="entry name" value="P-loop containing nucleotide triphosphate hydrolases"/>
    <property type="match status" value="1"/>
</dbReference>
<dbReference type="HAMAP" id="MF_00210">
    <property type="entry name" value="EPSP_synth"/>
    <property type="match status" value="1"/>
</dbReference>
<dbReference type="HAMAP" id="MF_03143">
    <property type="entry name" value="Pentafunct_AroM"/>
    <property type="match status" value="1"/>
</dbReference>
<dbReference type="HAMAP" id="MF_00109">
    <property type="entry name" value="Shikimate_kinase"/>
    <property type="match status" value="1"/>
</dbReference>
<dbReference type="InterPro" id="IPR013785">
    <property type="entry name" value="Aldolase_TIM"/>
</dbReference>
<dbReference type="InterPro" id="IPR046346">
    <property type="entry name" value="Aminoacid_DH-like_N_sf"/>
</dbReference>
<dbReference type="InterPro" id="IPR016037">
    <property type="entry name" value="DHQ_synth_AroB"/>
</dbReference>
<dbReference type="InterPro" id="IPR030960">
    <property type="entry name" value="DHQS/DOIS_N"/>
</dbReference>
<dbReference type="InterPro" id="IPR056179">
    <property type="entry name" value="DHQS_C"/>
</dbReference>
<dbReference type="InterPro" id="IPR001381">
    <property type="entry name" value="DHquinase_I"/>
</dbReference>
<dbReference type="InterPro" id="IPR001986">
    <property type="entry name" value="Enolpyruvate_Tfrase_dom"/>
</dbReference>
<dbReference type="InterPro" id="IPR036968">
    <property type="entry name" value="Enolpyruvate_Tfrase_sf"/>
</dbReference>
<dbReference type="InterPro" id="IPR006264">
    <property type="entry name" value="EPSP_synthase"/>
</dbReference>
<dbReference type="InterPro" id="IPR023193">
    <property type="entry name" value="EPSP_synthase_CS"/>
</dbReference>
<dbReference type="InterPro" id="IPR036291">
    <property type="entry name" value="NAD(P)-bd_dom_sf"/>
</dbReference>
<dbReference type="InterPro" id="IPR027417">
    <property type="entry name" value="P-loop_NTPase"/>
</dbReference>
<dbReference type="InterPro" id="IPR008289">
    <property type="entry name" value="Pentafunct_AroM"/>
</dbReference>
<dbReference type="InterPro" id="IPR013792">
    <property type="entry name" value="RNA3'P_cycl/enolpyr_Trfase_a/b"/>
</dbReference>
<dbReference type="InterPro" id="IPR041121">
    <property type="entry name" value="SDH_C"/>
</dbReference>
<dbReference type="InterPro" id="IPR031322">
    <property type="entry name" value="Shikimate/glucono_kinase"/>
</dbReference>
<dbReference type="InterPro" id="IPR013708">
    <property type="entry name" value="Shikimate_DH-bd_N"/>
</dbReference>
<dbReference type="InterPro" id="IPR010110">
    <property type="entry name" value="Shikimate_DH_AroM-type"/>
</dbReference>
<dbReference type="InterPro" id="IPR000623">
    <property type="entry name" value="Shikimate_kinase/TSH1"/>
</dbReference>
<dbReference type="InterPro" id="IPR023000">
    <property type="entry name" value="Shikimate_kinase_CS"/>
</dbReference>
<dbReference type="InterPro" id="IPR006151">
    <property type="entry name" value="Shikm_DH/Glu-tRNA_Rdtase"/>
</dbReference>
<dbReference type="NCBIfam" id="TIGR01356">
    <property type="entry name" value="aroA"/>
    <property type="match status" value="1"/>
</dbReference>
<dbReference type="NCBIfam" id="TIGR01357">
    <property type="entry name" value="aroB"/>
    <property type="match status" value="1"/>
</dbReference>
<dbReference type="NCBIfam" id="TIGR01093">
    <property type="entry name" value="aroD"/>
    <property type="match status" value="1"/>
</dbReference>
<dbReference type="NCBIfam" id="TIGR01809">
    <property type="entry name" value="Shik-DH-AROM"/>
    <property type="match status" value="1"/>
</dbReference>
<dbReference type="PANTHER" id="PTHR21090">
    <property type="entry name" value="AROM/DEHYDROQUINATE SYNTHASE"/>
    <property type="match status" value="1"/>
</dbReference>
<dbReference type="PANTHER" id="PTHR21090:SF5">
    <property type="entry name" value="PENTAFUNCTIONAL AROM POLYPEPTIDE"/>
    <property type="match status" value="1"/>
</dbReference>
<dbReference type="Pfam" id="PF01761">
    <property type="entry name" value="DHQ_synthase"/>
    <property type="match status" value="1"/>
</dbReference>
<dbReference type="Pfam" id="PF24621">
    <property type="entry name" value="DHQS_C"/>
    <property type="match status" value="1"/>
</dbReference>
<dbReference type="Pfam" id="PF01487">
    <property type="entry name" value="DHquinase_I"/>
    <property type="match status" value="1"/>
</dbReference>
<dbReference type="Pfam" id="PF00275">
    <property type="entry name" value="EPSP_synthase"/>
    <property type="match status" value="1"/>
</dbReference>
<dbReference type="Pfam" id="PF18317">
    <property type="entry name" value="SDH_C"/>
    <property type="match status" value="1"/>
</dbReference>
<dbReference type="Pfam" id="PF01488">
    <property type="entry name" value="Shikimate_DH"/>
    <property type="match status" value="1"/>
</dbReference>
<dbReference type="Pfam" id="PF08501">
    <property type="entry name" value="Shikimate_dh_N"/>
    <property type="match status" value="1"/>
</dbReference>
<dbReference type="Pfam" id="PF01202">
    <property type="entry name" value="SKI"/>
    <property type="match status" value="1"/>
</dbReference>
<dbReference type="PIRSF" id="PIRSF000514">
    <property type="entry name" value="Pentafunct_AroM"/>
    <property type="match status" value="1"/>
</dbReference>
<dbReference type="PRINTS" id="PR01100">
    <property type="entry name" value="SHIKIMTKNASE"/>
</dbReference>
<dbReference type="SUPFAM" id="SSF51569">
    <property type="entry name" value="Aldolase"/>
    <property type="match status" value="1"/>
</dbReference>
<dbReference type="SUPFAM" id="SSF53223">
    <property type="entry name" value="Aminoacid dehydrogenase-like, N-terminal domain"/>
    <property type="match status" value="1"/>
</dbReference>
<dbReference type="SUPFAM" id="SSF56796">
    <property type="entry name" value="Dehydroquinate synthase-like"/>
    <property type="match status" value="1"/>
</dbReference>
<dbReference type="SUPFAM" id="SSF55205">
    <property type="entry name" value="EPT/RTPC-like"/>
    <property type="match status" value="1"/>
</dbReference>
<dbReference type="SUPFAM" id="SSF51735">
    <property type="entry name" value="NAD(P)-binding Rossmann-fold domains"/>
    <property type="match status" value="1"/>
</dbReference>
<dbReference type="SUPFAM" id="SSF52540">
    <property type="entry name" value="P-loop containing nucleoside triphosphate hydrolases"/>
    <property type="match status" value="1"/>
</dbReference>
<dbReference type="PROSITE" id="PS00104">
    <property type="entry name" value="EPSP_SYNTHASE_1"/>
    <property type="match status" value="1"/>
</dbReference>
<dbReference type="PROSITE" id="PS00885">
    <property type="entry name" value="EPSP_SYNTHASE_2"/>
    <property type="match status" value="1"/>
</dbReference>
<dbReference type="PROSITE" id="PS01128">
    <property type="entry name" value="SHIKIMATE_KINASE"/>
    <property type="match status" value="1"/>
</dbReference>
<reference key="1">
    <citation type="journal article" date="2005" name="Science">
        <title>The genome of the basidiomycetous yeast and human pathogen Cryptococcus neoformans.</title>
        <authorList>
            <person name="Loftus B.J."/>
            <person name="Fung E."/>
            <person name="Roncaglia P."/>
            <person name="Rowley D."/>
            <person name="Amedeo P."/>
            <person name="Bruno D."/>
            <person name="Vamathevan J."/>
            <person name="Miranda M."/>
            <person name="Anderson I.J."/>
            <person name="Fraser J.A."/>
            <person name="Allen J.E."/>
            <person name="Bosdet I.E."/>
            <person name="Brent M.R."/>
            <person name="Chiu R."/>
            <person name="Doering T.L."/>
            <person name="Donlin M.J."/>
            <person name="D'Souza C.A."/>
            <person name="Fox D.S."/>
            <person name="Grinberg V."/>
            <person name="Fu J."/>
            <person name="Fukushima M."/>
            <person name="Haas B.J."/>
            <person name="Huang J.C."/>
            <person name="Janbon G."/>
            <person name="Jones S.J.M."/>
            <person name="Koo H.L."/>
            <person name="Krzywinski M.I."/>
            <person name="Kwon-Chung K.J."/>
            <person name="Lengeler K.B."/>
            <person name="Maiti R."/>
            <person name="Marra M.A."/>
            <person name="Marra R.E."/>
            <person name="Mathewson C.A."/>
            <person name="Mitchell T.G."/>
            <person name="Pertea M."/>
            <person name="Riggs F.R."/>
            <person name="Salzberg S.L."/>
            <person name="Schein J.E."/>
            <person name="Shvartsbeyn A."/>
            <person name="Shin H."/>
            <person name="Shumway M."/>
            <person name="Specht C.A."/>
            <person name="Suh B.B."/>
            <person name="Tenney A."/>
            <person name="Utterback T.R."/>
            <person name="Wickes B.L."/>
            <person name="Wortman J.R."/>
            <person name="Wye N.H."/>
            <person name="Kronstad J.W."/>
            <person name="Lodge J.K."/>
            <person name="Heitman J."/>
            <person name="Davis R.W."/>
            <person name="Fraser C.M."/>
            <person name="Hyman R.W."/>
        </authorList>
    </citation>
    <scope>NUCLEOTIDE SEQUENCE [LARGE SCALE GENOMIC DNA]</scope>
    <source>
        <strain>B-3501A</strain>
    </source>
</reference>
<gene>
    <name type="ordered locus">CNBB3730</name>
</gene>
<organism>
    <name type="scientific">Cryptococcus neoformans var. neoformans serotype D (strain B-3501A)</name>
    <name type="common">Filobasidiella neoformans</name>
    <dbReference type="NCBI Taxonomy" id="283643"/>
    <lineage>
        <taxon>Eukaryota</taxon>
        <taxon>Fungi</taxon>
        <taxon>Dikarya</taxon>
        <taxon>Basidiomycota</taxon>
        <taxon>Agaricomycotina</taxon>
        <taxon>Tremellomycetes</taxon>
        <taxon>Tremellales</taxon>
        <taxon>Cryptococcaceae</taxon>
        <taxon>Cryptococcus</taxon>
        <taxon>Cryptococcus neoformans species complex</taxon>
    </lineage>
</organism>
<evidence type="ECO:0000255" key="1">
    <source>
        <dbReference type="HAMAP-Rule" id="MF_03143"/>
    </source>
</evidence>
<comment type="function">
    <text evidence="1">The AROM polypeptide catalyzes 5 consecutive enzymatic reactions in prechorismate polyaromatic amino acid biosynthesis.</text>
</comment>
<comment type="catalytic activity">
    <reaction evidence="1">
        <text>7-phospho-2-dehydro-3-deoxy-D-arabino-heptonate = 3-dehydroquinate + phosphate</text>
        <dbReference type="Rhea" id="RHEA:21968"/>
        <dbReference type="ChEBI" id="CHEBI:32364"/>
        <dbReference type="ChEBI" id="CHEBI:43474"/>
        <dbReference type="ChEBI" id="CHEBI:58394"/>
        <dbReference type="EC" id="4.2.3.4"/>
    </reaction>
</comment>
<comment type="catalytic activity">
    <reaction evidence="1">
        <text>3-dehydroquinate = 3-dehydroshikimate + H2O</text>
        <dbReference type="Rhea" id="RHEA:21096"/>
        <dbReference type="ChEBI" id="CHEBI:15377"/>
        <dbReference type="ChEBI" id="CHEBI:16630"/>
        <dbReference type="ChEBI" id="CHEBI:32364"/>
        <dbReference type="EC" id="4.2.1.10"/>
    </reaction>
</comment>
<comment type="catalytic activity">
    <reaction evidence="1">
        <text>shikimate + NADP(+) = 3-dehydroshikimate + NADPH + H(+)</text>
        <dbReference type="Rhea" id="RHEA:17737"/>
        <dbReference type="ChEBI" id="CHEBI:15378"/>
        <dbReference type="ChEBI" id="CHEBI:16630"/>
        <dbReference type="ChEBI" id="CHEBI:36208"/>
        <dbReference type="ChEBI" id="CHEBI:57783"/>
        <dbReference type="ChEBI" id="CHEBI:58349"/>
        <dbReference type="EC" id="1.1.1.25"/>
    </reaction>
</comment>
<comment type="catalytic activity">
    <reaction evidence="1">
        <text>shikimate + ATP = 3-phosphoshikimate + ADP + H(+)</text>
        <dbReference type="Rhea" id="RHEA:13121"/>
        <dbReference type="ChEBI" id="CHEBI:15378"/>
        <dbReference type="ChEBI" id="CHEBI:30616"/>
        <dbReference type="ChEBI" id="CHEBI:36208"/>
        <dbReference type="ChEBI" id="CHEBI:145989"/>
        <dbReference type="ChEBI" id="CHEBI:456216"/>
        <dbReference type="EC" id="2.7.1.71"/>
    </reaction>
</comment>
<comment type="catalytic activity">
    <reaction evidence="1">
        <text>3-phosphoshikimate + phosphoenolpyruvate = 5-O-(1-carboxyvinyl)-3-phosphoshikimate + phosphate</text>
        <dbReference type="Rhea" id="RHEA:21256"/>
        <dbReference type="ChEBI" id="CHEBI:43474"/>
        <dbReference type="ChEBI" id="CHEBI:57701"/>
        <dbReference type="ChEBI" id="CHEBI:58702"/>
        <dbReference type="ChEBI" id="CHEBI:145989"/>
        <dbReference type="EC" id="2.5.1.19"/>
    </reaction>
</comment>
<comment type="cofactor">
    <cofactor>
        <name>Zn(2+)</name>
        <dbReference type="ChEBI" id="CHEBI:29105"/>
    </cofactor>
    <text>Binds 2 Zn(2+) ions per subunit.</text>
</comment>
<comment type="pathway">
    <text evidence="1">Metabolic intermediate biosynthesis; chorismate biosynthesis; chorismate from D-erythrose 4-phosphate and phosphoenolpyruvate: step 2/7.</text>
</comment>
<comment type="pathway">
    <text evidence="1">Metabolic intermediate biosynthesis; chorismate biosynthesis; chorismate from D-erythrose 4-phosphate and phosphoenolpyruvate: step 3/7.</text>
</comment>
<comment type="pathway">
    <text evidence="1">Metabolic intermediate biosynthesis; chorismate biosynthesis; chorismate from D-erythrose 4-phosphate and phosphoenolpyruvate: step 4/7.</text>
</comment>
<comment type="pathway">
    <text evidence="1">Metabolic intermediate biosynthesis; chorismate biosynthesis; chorismate from D-erythrose 4-phosphate and phosphoenolpyruvate: step 5/7.</text>
</comment>
<comment type="pathway">
    <text evidence="1">Metabolic intermediate biosynthesis; chorismate biosynthesis; chorismate from D-erythrose 4-phosphate and phosphoenolpyruvate: step 6/7.</text>
</comment>
<comment type="subunit">
    <text evidence="1">Homodimer.</text>
</comment>
<comment type="subcellular location">
    <subcellularLocation>
        <location evidence="1">Cytoplasm</location>
    </subcellularLocation>
</comment>
<comment type="similarity">
    <text evidence="1">In the N-terminal section; belongs to the sugar phosphate cyclases superfamily. Dehydroquinate synthase family.</text>
</comment>
<comment type="similarity">
    <text evidence="1">In the 2nd section; belongs to the EPSP synthase family.</text>
</comment>
<comment type="similarity">
    <text evidence="1">In the 3rd section; belongs to the shikimate kinase family.</text>
</comment>
<comment type="similarity">
    <text evidence="1">In the 4th section; belongs to the type-I 3-dehydroquinase family.</text>
</comment>
<comment type="similarity">
    <text evidence="1">In the C-terminal section; belongs to the shikimate dehydrogenase family.</text>
</comment>
<feature type="chain" id="PRO_0000410013" description="Pentafunctional AROM polypeptide">
    <location>
        <begin position="1"/>
        <end position="1611"/>
    </location>
</feature>
<feature type="region of interest" description="3-dehydroquinate synthase">
    <location>
        <begin position="1"/>
        <end position="391"/>
    </location>
</feature>
<feature type="region of interest" description="EPSP synthase">
    <location>
        <begin position="404"/>
        <end position="863"/>
    </location>
</feature>
<feature type="region of interest" description="Shikimate kinase">
    <location>
        <begin position="892"/>
        <end position="1093"/>
    </location>
</feature>
<feature type="region of interest" description="3-dehydroquinase">
    <location>
        <begin position="1094"/>
        <end position="1318"/>
    </location>
</feature>
<feature type="region of interest" description="Shikimate dehydrogenase">
    <location>
        <begin position="1331"/>
        <end position="1611"/>
    </location>
</feature>
<feature type="active site" description="Proton acceptor; for 3-dehydroquinate synthase activity" evidence="1">
    <location>
        <position position="267"/>
    </location>
</feature>
<feature type="active site" description="Proton acceptor; for 3-dehydroquinate synthase activity" evidence="1">
    <location>
        <position position="282"/>
    </location>
</feature>
<feature type="active site" description="For EPSP synthase activity" evidence="1">
    <location>
        <position position="845"/>
    </location>
</feature>
<feature type="active site" description="Proton acceptor; for 3-dehydroquinate dehydratase activity" evidence="1">
    <location>
        <position position="1220"/>
    </location>
</feature>
<feature type="active site" description="Schiff-base intermediate with substrate; for 3-dehydroquinate dehydratase activity" evidence="1">
    <location>
        <position position="1248"/>
    </location>
</feature>
<feature type="binding site" evidence="1">
    <location>
        <begin position="47"/>
        <end position="49"/>
    </location>
    <ligand>
        <name>NAD(+)</name>
        <dbReference type="ChEBI" id="CHEBI:57540"/>
    </ligand>
</feature>
<feature type="binding site" evidence="1">
    <location>
        <begin position="84"/>
        <end position="87"/>
    </location>
    <ligand>
        <name>NAD(+)</name>
        <dbReference type="ChEBI" id="CHEBI:57540"/>
    </ligand>
</feature>
<feature type="binding site" evidence="1">
    <location>
        <begin position="115"/>
        <end position="117"/>
    </location>
    <ligand>
        <name>NAD(+)</name>
        <dbReference type="ChEBI" id="CHEBI:57540"/>
    </ligand>
</feature>
<feature type="binding site" evidence="1">
    <location>
        <position position="120"/>
    </location>
    <ligand>
        <name>NAD(+)</name>
        <dbReference type="ChEBI" id="CHEBI:57540"/>
    </ligand>
</feature>
<feature type="binding site" evidence="1">
    <location>
        <position position="131"/>
    </location>
    <ligand>
        <name>7-phospho-2-dehydro-3-deoxy-D-arabino-heptonate</name>
        <dbReference type="ChEBI" id="CHEBI:58394"/>
    </ligand>
</feature>
<feature type="binding site" evidence="1">
    <location>
        <begin position="140"/>
        <end position="141"/>
    </location>
    <ligand>
        <name>NAD(+)</name>
        <dbReference type="ChEBI" id="CHEBI:57540"/>
    </ligand>
</feature>
<feature type="binding site" evidence="1">
    <location>
        <position position="147"/>
    </location>
    <ligand>
        <name>7-phospho-2-dehydro-3-deoxy-D-arabino-heptonate</name>
        <dbReference type="ChEBI" id="CHEBI:58394"/>
    </ligand>
</feature>
<feature type="binding site" evidence="1">
    <location>
        <position position="153"/>
    </location>
    <ligand>
        <name>7-phospho-2-dehydro-3-deoxy-D-arabino-heptonate</name>
        <dbReference type="ChEBI" id="CHEBI:58394"/>
    </ligand>
</feature>
<feature type="binding site" evidence="1">
    <location>
        <position position="162"/>
    </location>
    <ligand>
        <name>NAD(+)</name>
        <dbReference type="ChEBI" id="CHEBI:57540"/>
    </ligand>
</feature>
<feature type="binding site" evidence="1">
    <location>
        <position position="163"/>
    </location>
    <ligand>
        <name>7-phospho-2-dehydro-3-deoxy-D-arabino-heptonate</name>
        <dbReference type="ChEBI" id="CHEBI:58394"/>
    </ligand>
</feature>
<feature type="binding site" evidence="1">
    <location>
        <begin position="180"/>
        <end position="183"/>
    </location>
    <ligand>
        <name>NAD(+)</name>
        <dbReference type="ChEBI" id="CHEBI:57540"/>
    </ligand>
</feature>
<feature type="binding site" evidence="1">
    <location>
        <position position="191"/>
    </location>
    <ligand>
        <name>NAD(+)</name>
        <dbReference type="ChEBI" id="CHEBI:57540"/>
    </ligand>
</feature>
<feature type="binding site" evidence="1">
    <location>
        <begin position="195"/>
        <end position="198"/>
    </location>
    <ligand>
        <name>7-phospho-2-dehydro-3-deoxy-D-arabino-heptonate</name>
        <dbReference type="ChEBI" id="CHEBI:58394"/>
    </ligand>
</feature>
<feature type="binding site" evidence="1">
    <location>
        <position position="195"/>
    </location>
    <ligand>
        <name>Zn(2+)</name>
        <dbReference type="ChEBI" id="CHEBI:29105"/>
        <note>catalytic</note>
    </ligand>
</feature>
<feature type="binding site" evidence="1">
    <location>
        <position position="257"/>
    </location>
    <ligand>
        <name>7-phospho-2-dehydro-3-deoxy-D-arabino-heptonate</name>
        <dbReference type="ChEBI" id="CHEBI:58394"/>
    </ligand>
</feature>
<feature type="binding site" evidence="1">
    <location>
        <begin position="271"/>
        <end position="275"/>
    </location>
    <ligand>
        <name>7-phospho-2-dehydro-3-deoxy-D-arabino-heptonate</name>
        <dbReference type="ChEBI" id="CHEBI:58394"/>
    </ligand>
</feature>
<feature type="binding site" evidence="1">
    <location>
        <position position="278"/>
    </location>
    <ligand>
        <name>7-phospho-2-dehydro-3-deoxy-D-arabino-heptonate</name>
        <dbReference type="ChEBI" id="CHEBI:58394"/>
    </ligand>
</feature>
<feature type="binding site" evidence="1">
    <location>
        <position position="278"/>
    </location>
    <ligand>
        <name>Zn(2+)</name>
        <dbReference type="ChEBI" id="CHEBI:29105"/>
        <note>catalytic</note>
    </ligand>
</feature>
<feature type="binding site" evidence="1">
    <location>
        <position position="294"/>
    </location>
    <ligand>
        <name>7-phospho-2-dehydro-3-deoxy-D-arabino-heptonate</name>
        <dbReference type="ChEBI" id="CHEBI:58394"/>
    </ligand>
</feature>
<feature type="binding site" evidence="1">
    <location>
        <position position="294"/>
    </location>
    <ligand>
        <name>Zn(2+)</name>
        <dbReference type="ChEBI" id="CHEBI:29105"/>
        <note>catalytic</note>
    </ligand>
</feature>
<feature type="binding site" evidence="1">
    <location>
        <position position="363"/>
    </location>
    <ligand>
        <name>7-phospho-2-dehydro-3-deoxy-D-arabino-heptonate</name>
        <dbReference type="ChEBI" id="CHEBI:58394"/>
    </ligand>
</feature>
<feature type="binding site" evidence="1">
    <location>
        <begin position="899"/>
        <end position="906"/>
    </location>
    <ligand>
        <name>ATP</name>
        <dbReference type="ChEBI" id="CHEBI:30616"/>
    </ligand>
</feature>
<accession>P0CM23</accession>
<accession>Q55XJ0</accession>
<accession>Q5KME5</accession>
<proteinExistence type="inferred from homology"/>
<sequence length="1611" mass="173474">MSSSSADVLKISILGNESIHVGFHLLPYIFKTITTTLPSSTYVLITDTNLSAIYLNDFKASFEEAASEADNKARFLVYEVAPGEGAKSRKVKGEIEDWMLDNKCTRDTVILAFGGGVIGDLTGFVAATFMRGVKFVQIPTTLLAMVDSSVGGKTAIDTPHGKNLIGAFWQPSYIFVDLAFLTTLPTREVSNGMAEVIKTAAIWKDDDFALLESRSAEISLAASSRPTGVPTAGRFVSDRSHAQSLLLQVVSGSIYVKAHIVTIDERETGLRNLVNFGHTIGHAIEAVLTPAMLHGECVSVGIVLEAEVARQLGILSQVAVGRLTRCLQAYGLPVSLSDRRITALPASSQLSVDRLLDIMKIDKKNSGPAKKIVLLSRIGKTYEEKASVVADDVISKVLCEAVTVKAATPTKSPITMATPGSKSISNRALVLAALGKGTCRVRNLLHSDDTAVMMNALVELKGAVFSWEDGGDTIVVEGGGGILSTPAKGKELYLGNAGTASRFLTTVCAMVSGSASSERSTVITGNARMKQRPIGPLVDALTANGAKVKYLESTGCLPLDIDTDGFRGGHIQLAASVSSQYVSSILLCAPYAAEQVTLELTGGQVISQPYIDMTIAMMKQFGATVERQKDEQGNLLDIYVIPKCTYVNPPEYSVESDASSATYPLAIAAITGTTCTISNIGSSSLQGDARFAKEILEPMGCIVEQTLTSTKVTGPPVGTLRALGNVDMEPMTDAFLTASVLAAVAVKPCLPERKVEGLPETASRIYGIANQRVKECNRIQAMRDQLAKFGIETDEFDDGIIIFGKPEASLFRGASIHCYDDHRVAMAFAVLSCIIDETIIEEKRCVEKTWPNFWDDLQNKIGVAVEGVELETHNQASTSAKPVSPIDQSQSDRPIFLIGMRGAGKTYVGRMAADILSGQFTDADDVFAQESHQTVSEFVAANGWDEFRKKETEILSKFVEEHRGNHVIALGGGIVETETARETLKAHVAKGGHVVHVTRALEDIEAYLDSIGNTAVRPNWGETFADVFKRREPWYQACSSHEFYNVLEAVGGQTHEEHTKAMRAECGRFFKFITGRESNRPRLSVGNPTSFLSLTFPDVTPALIHLDELTEGADAVEFRVDLLSTTGQAPTRPALPPISFVAKQLASLRLATTLPIVFSVRSKDQGGMVPSDNAEAYGALVRLGLRCACEYVDLEVCWPEQLLDSIVQLKRETHIIASWHDWTGDMAWDGEEMKAKHVLCEKYGDVAKIVGTAKSGLDNAKLAIFVGEVQSHPGAKPLLAINMGAAGQLSRILNPILTPVTHDALPSRAAPGQLTAREILQARALTGSLPAKKFVLFGSPIAHSVSPLLHNAGFATLGLPHTYRLHESEKVDQGVLEVIRSPDFGGASVTIPLKLDIIPHLDSVSEDAKIIGAVNTVIPRGGKLHGENTDWQAIHQAAAQNLDADALSYGSSTALVIGAGGTCRAAIYAMHKLRFKTIYLFNRTPENAAKVKASFPESYNIAVVTSLSSLPEAPVVVVSTVPGNSLTLDTFSQGIYLPSEVLSRPKGVAIDLAYKPHMTALLHAAEKKEGWKVVPGVEILCLQGFKQFEEWTGKRAPQKKMRKAVLDKYFA</sequence>